<keyword id="KW-0002">3D-structure</keyword>
<keyword id="KW-0007">Acetylation</keyword>
<keyword id="KW-0025">Alternative splicing</keyword>
<keyword id="KW-0158">Chromosome</keyword>
<keyword id="KW-0963">Cytoplasm</keyword>
<keyword id="KW-0903">Direct protein sequencing</keyword>
<keyword id="KW-0227">DNA damage</keyword>
<keyword id="KW-0234">DNA repair</keyword>
<keyword id="KW-0539">Nucleus</keyword>
<keyword id="KW-1267">Proteomics identification</keyword>
<keyword id="KW-1185">Reference proteome</keyword>
<feature type="chain" id="PRO_0000320948" description="Cell cycle regulator of non-homologous end joining">
    <location>
        <begin position="1"/>
        <end position="157"/>
    </location>
</feature>
<feature type="region of interest" description="Disordered" evidence="3">
    <location>
        <begin position="77"/>
        <end position="147"/>
    </location>
</feature>
<feature type="short sequence motif" description="KBM" evidence="6 7">
    <location>
        <begin position="1"/>
        <end position="21"/>
    </location>
</feature>
<feature type="short sequence motif" description="XLM" evidence="13">
    <location>
        <begin position="147"/>
        <end position="157"/>
    </location>
</feature>
<feature type="compositionally biased region" description="Low complexity" evidence="3">
    <location>
        <begin position="98"/>
        <end position="107"/>
    </location>
</feature>
<feature type="compositionally biased region" description="Polar residues" evidence="3">
    <location>
        <begin position="123"/>
        <end position="136"/>
    </location>
</feature>
<feature type="modified residue" description="N-acetylmethionine" evidence="18">
    <location>
        <position position="1"/>
    </location>
</feature>
<feature type="splice variant" id="VSP_031767" description="In isoform 3." evidence="11">
    <location>
        <begin position="1"/>
        <end position="55"/>
    </location>
</feature>
<feature type="splice variant" id="VSP_031768" description="In isoform 2." evidence="10">
    <original>METLQSETKTRVLPSWLTAQVATKNVAPMKAPKRMRMAAVPVAAA</original>
    <variation>MRLESLCHLCLACLFF</variation>
    <location>
        <begin position="1"/>
        <end position="45"/>
    </location>
</feature>
<feature type="splice variant" id="VSP_058524" description="In isoform 4." evidence="10">
    <original>LPATRTVYCMNEAEIVDVALGIL</original>
    <variation>CDSSGQKTPANLTPCDKDCVLHE</variation>
    <location>
        <begin position="47"/>
        <end position="69"/>
    </location>
</feature>
<feature type="splice variant" id="VSP_058525" description="In isoform 4." evidence="10">
    <location>
        <begin position="70"/>
        <end position="157"/>
    </location>
</feature>
<feature type="sequence variant" id="VAR_039320" description="In a colorectal cancer sample; somatic mutation; dbSNP:rs776124276." evidence="4">
    <original>P</original>
    <variation>L</variation>
    <location>
        <position position="82"/>
    </location>
</feature>
<feature type="mutagenesis site" description="Abolishes interaction with XRCC5/Ku80 and XRCC6/Ku70 and ability to inhibit classical non-homologous end joining (NHEJ)." evidence="7">
    <original>R</original>
    <variation>A</variation>
    <location>
        <position position="11"/>
    </location>
</feature>
<feature type="mutagenesis site" description="Abolishes interaction with XRCC5/Ku80 and XRCC6/Ku70 and ability to inhibit classical non-homologous end joining (NHEJ)." evidence="7">
    <original>P</original>
    <variation>A</variation>
    <location>
        <position position="14"/>
    </location>
</feature>
<feature type="mutagenesis site" description="Abolishes interaction with XRCC5/Ku80 and XRCC6/Ku70 and ability to inhibit classical non-homologous end joining (NHEJ). Does not affect interaction with SF3B1." evidence="6 7 9">
    <original>W</original>
    <variation>A</variation>
    <location>
        <position position="16"/>
    </location>
</feature>
<feature type="mutagenesis site" description="Does not affect interaction with SF3B1." evidence="9">
    <original>E</original>
    <variation>A</variation>
    <location>
        <position position="71"/>
    </location>
</feature>
<feature type="mutagenesis site" description="Abolishes interaction with SF3B1." evidence="9">
    <original>E</original>
    <variation>A</variation>
    <location>
        <position position="153"/>
    </location>
</feature>
<feature type="helix" evidence="19">
    <location>
        <begin position="15"/>
        <end position="18"/>
    </location>
</feature>
<accession>Q9BWK5</accession>
<accession>A0A024R780</accession>
<accession>A0A087WWQ8</accession>
<accession>Q6NWZ4</accession>
<accession>Q6ZNR5</accession>
<dbReference type="EMBL" id="AK026103">
    <property type="status" value="NOT_ANNOTATED_CDS"/>
    <property type="molecule type" value="mRNA"/>
</dbReference>
<dbReference type="EMBL" id="AK130795">
    <property type="protein sequence ID" value="BAC85431.1"/>
    <property type="molecule type" value="mRNA"/>
</dbReference>
<dbReference type="EMBL" id="AC083862">
    <property type="status" value="NOT_ANNOTATED_CDS"/>
    <property type="molecule type" value="Genomic_DNA"/>
</dbReference>
<dbReference type="EMBL" id="CH236950">
    <property type="protein sequence ID" value="EAL24064.1"/>
    <property type="molecule type" value="Genomic_DNA"/>
</dbReference>
<dbReference type="EMBL" id="CH471070">
    <property type="protein sequence ID" value="EAW83840.1"/>
    <property type="molecule type" value="Genomic_DNA"/>
</dbReference>
<dbReference type="EMBL" id="CH471070">
    <property type="protein sequence ID" value="EAW83841.1"/>
    <property type="molecule type" value="Genomic_DNA"/>
</dbReference>
<dbReference type="EMBL" id="BC000168">
    <property type="protein sequence ID" value="AAH00168.1"/>
    <property type="status" value="ALT_INIT"/>
    <property type="molecule type" value="mRNA"/>
</dbReference>
<dbReference type="EMBL" id="BC067350">
    <property type="protein sequence ID" value="AAH67350.1"/>
    <property type="molecule type" value="mRNA"/>
</dbReference>
<dbReference type="CCDS" id="CCDS5838.2">
    <molecule id="Q9BWK5-1"/>
</dbReference>
<dbReference type="CCDS" id="CCDS59082.1">
    <molecule id="Q9BWK5-3"/>
</dbReference>
<dbReference type="CCDS" id="CCDS75663.1">
    <molecule id="Q9BWK5-4"/>
</dbReference>
<dbReference type="RefSeq" id="NP_001230678.1">
    <molecule id="Q9BWK5-4"/>
    <property type="nucleotide sequence ID" value="NM_001243749.2"/>
</dbReference>
<dbReference type="RefSeq" id="NP_001230680.1">
    <molecule id="Q9BWK5-4"/>
    <property type="nucleotide sequence ID" value="NM_001243751.2"/>
</dbReference>
<dbReference type="RefSeq" id="NP_001230681.1">
    <molecule id="Q9BWK5-4"/>
    <property type="nucleotide sequence ID" value="NM_001243752.2"/>
</dbReference>
<dbReference type="RefSeq" id="NP_001230682.1">
    <molecule id="Q9BWK5-4"/>
    <property type="nucleotide sequence ID" value="NM_001243753.2"/>
</dbReference>
<dbReference type="RefSeq" id="NP_001230683.1">
    <molecule id="Q9BWK5-3"/>
    <property type="nucleotide sequence ID" value="NM_001243754.2"/>
</dbReference>
<dbReference type="RefSeq" id="NP_001230684.1">
    <molecule id="Q9BWK5-3"/>
    <property type="nucleotide sequence ID" value="NM_001243755.2"/>
</dbReference>
<dbReference type="RefSeq" id="NP_001292558.1">
    <property type="nucleotide sequence ID" value="NM_001305629.1"/>
</dbReference>
<dbReference type="RefSeq" id="NP_001350258.1">
    <molecule id="Q9BWK5-1"/>
    <property type="nucleotide sequence ID" value="NM_001363329.2"/>
</dbReference>
<dbReference type="RefSeq" id="NP_001350259.1">
    <molecule id="Q9BWK5-1"/>
    <property type="nucleotide sequence ID" value="NM_001363330.2"/>
</dbReference>
<dbReference type="RefSeq" id="NP_076938.2">
    <molecule id="Q9BWK5-1"/>
    <property type="nucleotide sequence ID" value="NM_024033.4"/>
</dbReference>
<dbReference type="RefSeq" id="XP_016868078.1">
    <property type="nucleotide sequence ID" value="XM_017012589.1"/>
</dbReference>
<dbReference type="RefSeq" id="XP_016868079.1">
    <property type="nucleotide sequence ID" value="XM_017012590.1"/>
</dbReference>
<dbReference type="RefSeq" id="XP_016868080.1">
    <molecule id="Q9BWK5-1"/>
    <property type="nucleotide sequence ID" value="XM_017012591.3"/>
</dbReference>
<dbReference type="RefSeq" id="XP_016868082.1">
    <property type="nucleotide sequence ID" value="XM_017012593.1"/>
</dbReference>
<dbReference type="RefSeq" id="XP_016868083.1">
    <property type="nucleotide sequence ID" value="XM_017012594.1"/>
</dbReference>
<dbReference type="RefSeq" id="XP_016868084.1">
    <molecule id="Q9BWK5-4"/>
    <property type="nucleotide sequence ID" value="XM_017012595.2"/>
</dbReference>
<dbReference type="RefSeq" id="XP_047276781.1">
    <molecule id="Q9BWK5-4"/>
    <property type="nucleotide sequence ID" value="XM_047420825.1"/>
</dbReference>
<dbReference type="RefSeq" id="XP_047276782.1">
    <molecule id="Q9BWK5-4"/>
    <property type="nucleotide sequence ID" value="XM_047420826.1"/>
</dbReference>
<dbReference type="RefSeq" id="XP_054214961.1">
    <molecule id="Q9BWK5-4"/>
    <property type="nucleotide sequence ID" value="XM_054358986.1"/>
</dbReference>
<dbReference type="RefSeq" id="XP_054214962.1">
    <molecule id="Q9BWK5-4"/>
    <property type="nucleotide sequence ID" value="XM_054358987.1"/>
</dbReference>
<dbReference type="RefSeq" id="XP_054214963.1">
    <molecule id="Q9BWK5-4"/>
    <property type="nucleotide sequence ID" value="XM_054358988.1"/>
</dbReference>
<dbReference type="PDB" id="6TYU">
    <property type="method" value="X-ray"/>
    <property type="resolution" value="1.47 A"/>
    <property type="chains" value="B=6-21"/>
</dbReference>
<dbReference type="PDBsum" id="6TYU"/>
<dbReference type="SMR" id="Q9BWK5"/>
<dbReference type="BioGRID" id="122467">
    <property type="interactions" value="25"/>
</dbReference>
<dbReference type="FunCoup" id="Q9BWK5">
    <property type="interactions" value="1688"/>
</dbReference>
<dbReference type="IntAct" id="Q9BWK5">
    <property type="interactions" value="14"/>
</dbReference>
<dbReference type="STRING" id="9606.ENSP00000376823"/>
<dbReference type="GlyGen" id="Q9BWK5">
    <property type="glycosylation" value="2 sites, 1 O-linked glycan (1 site)"/>
</dbReference>
<dbReference type="iPTMnet" id="Q9BWK5"/>
<dbReference type="PhosphoSitePlus" id="Q9BWK5"/>
<dbReference type="BioMuta" id="C7orf49"/>
<dbReference type="DMDM" id="182676205"/>
<dbReference type="jPOST" id="Q9BWK5"/>
<dbReference type="MassIVE" id="Q9BWK5"/>
<dbReference type="PaxDb" id="9606-ENSP00000376823"/>
<dbReference type="PeptideAtlas" id="Q9BWK5"/>
<dbReference type="ProteomicsDB" id="79284">
    <molecule id="Q9BWK5-1"/>
</dbReference>
<dbReference type="ProteomicsDB" id="79285">
    <molecule id="Q9BWK5-2"/>
</dbReference>
<dbReference type="ProteomicsDB" id="79286">
    <molecule id="Q9BWK5-3"/>
</dbReference>
<dbReference type="Pumba" id="Q9BWK5"/>
<dbReference type="Antibodypedia" id="18116">
    <property type="antibodies" value="50 antibodies from 17 providers"/>
</dbReference>
<dbReference type="DNASU" id="78996"/>
<dbReference type="Ensembl" id="ENST00000393114.8">
    <molecule id="Q9BWK5-1"/>
    <property type="protein sequence ID" value="ENSP00000376823.3"/>
    <property type="gene ID" value="ENSG00000122783.17"/>
</dbReference>
<dbReference type="Ensembl" id="ENST00000424142.5">
    <molecule id="Q9BWK5-3"/>
    <property type="protein sequence ID" value="ENSP00000400024.1"/>
    <property type="gene ID" value="ENSG00000122783.17"/>
</dbReference>
<dbReference type="Ensembl" id="ENST00000483029.2">
    <molecule id="Q9BWK5-3"/>
    <property type="protein sequence ID" value="ENSP00000473365.1"/>
    <property type="gene ID" value="ENSG00000122783.17"/>
</dbReference>
<dbReference type="Ensembl" id="ENST00000617987.1">
    <molecule id="Q9BWK5-4"/>
    <property type="protein sequence ID" value="ENSP00000480430.1"/>
    <property type="gene ID" value="ENSG00000122783.17"/>
</dbReference>
<dbReference type="Ensembl" id="ENST00000620897.4">
    <molecule id="Q9BWK5-3"/>
    <property type="protein sequence ID" value="ENSP00000481014.1"/>
    <property type="gene ID" value="ENSG00000122783.17"/>
</dbReference>
<dbReference type="GeneID" id="78996"/>
<dbReference type="KEGG" id="hsa:78996"/>
<dbReference type="MANE-Select" id="ENST00000393114.8">
    <property type="protein sequence ID" value="ENSP00000376823.3"/>
    <property type="RefSeq nucleotide sequence ID" value="NM_024033.4"/>
    <property type="RefSeq protein sequence ID" value="NP_076938.2"/>
</dbReference>
<dbReference type="UCSC" id="uc003vsl.4">
    <molecule id="Q9BWK5-1"/>
    <property type="organism name" value="human"/>
</dbReference>
<dbReference type="UCSC" id="uc022amb.2">
    <property type="organism name" value="human"/>
</dbReference>
<dbReference type="AGR" id="HGNC:22432"/>
<dbReference type="CTD" id="78996"/>
<dbReference type="DisGeNET" id="78996"/>
<dbReference type="GeneCards" id="CYREN"/>
<dbReference type="HGNC" id="HGNC:22432">
    <property type="gene designation" value="CYREN"/>
</dbReference>
<dbReference type="HPA" id="ENSG00000122783">
    <property type="expression patterns" value="Low tissue specificity"/>
</dbReference>
<dbReference type="MIM" id="616980">
    <property type="type" value="gene"/>
</dbReference>
<dbReference type="neXtProt" id="NX_Q9BWK5"/>
<dbReference type="OpenTargets" id="ENSG00000122783"/>
<dbReference type="PharmGKB" id="PA162380533"/>
<dbReference type="VEuPathDB" id="HostDB:ENSG00000122783"/>
<dbReference type="eggNOG" id="ENOG502SEX2">
    <property type="taxonomic scope" value="Eukaryota"/>
</dbReference>
<dbReference type="GeneTree" id="ENSGT00390000013192"/>
<dbReference type="HOGENOM" id="CLU_126072_0_0_1"/>
<dbReference type="InParanoid" id="Q9BWK5"/>
<dbReference type="OMA" id="VLPTWMT"/>
<dbReference type="OrthoDB" id="8936475at2759"/>
<dbReference type="PAN-GO" id="Q9BWK5">
    <property type="GO annotations" value="3 GO annotations based on evolutionary models"/>
</dbReference>
<dbReference type="PhylomeDB" id="Q9BWK5"/>
<dbReference type="TreeFam" id="TF336925"/>
<dbReference type="PathwayCommons" id="Q9BWK5"/>
<dbReference type="SignaLink" id="Q9BWK5"/>
<dbReference type="BioGRID-ORCS" id="78996">
    <property type="hits" value="14 hits in 1125 CRISPR screens"/>
</dbReference>
<dbReference type="ChiTaRS" id="C7orf49">
    <property type="organism name" value="human"/>
</dbReference>
<dbReference type="GenomeRNAi" id="78996"/>
<dbReference type="Pharos" id="Q9BWK5">
    <property type="development level" value="Tbio"/>
</dbReference>
<dbReference type="PRO" id="PR:Q9BWK5"/>
<dbReference type="Proteomes" id="UP000005640">
    <property type="component" value="Chromosome 7"/>
</dbReference>
<dbReference type="RNAct" id="Q9BWK5">
    <property type="molecule type" value="protein"/>
</dbReference>
<dbReference type="Bgee" id="ENSG00000122783">
    <property type="expression patterns" value="Expressed in gastrocnemius and 189 other cell types or tissues"/>
</dbReference>
<dbReference type="ExpressionAtlas" id="Q9BWK5">
    <property type="expression patterns" value="baseline and differential"/>
</dbReference>
<dbReference type="GO" id="GO:0005737">
    <property type="term" value="C:cytoplasm"/>
    <property type="evidence" value="ECO:0000314"/>
    <property type="project" value="UniProtKB"/>
</dbReference>
<dbReference type="GO" id="GO:1990391">
    <property type="term" value="C:DNA repair complex"/>
    <property type="evidence" value="ECO:0007669"/>
    <property type="project" value="Ensembl"/>
</dbReference>
<dbReference type="GO" id="GO:0005634">
    <property type="term" value="C:nucleus"/>
    <property type="evidence" value="ECO:0000314"/>
    <property type="project" value="UniProtKB"/>
</dbReference>
<dbReference type="GO" id="GO:0035861">
    <property type="term" value="C:site of double-strand break"/>
    <property type="evidence" value="ECO:0000250"/>
    <property type="project" value="UniProtKB"/>
</dbReference>
<dbReference type="GO" id="GO:0003684">
    <property type="term" value="F:damaged DNA binding"/>
    <property type="evidence" value="ECO:0007669"/>
    <property type="project" value="Ensembl"/>
</dbReference>
<dbReference type="GO" id="GO:0006303">
    <property type="term" value="P:double-strand break repair via nonhomologous end joining"/>
    <property type="evidence" value="ECO:0000314"/>
    <property type="project" value="UniProtKB"/>
</dbReference>
<dbReference type="GO" id="GO:0033152">
    <property type="term" value="P:immunoglobulin V(D)J recombination"/>
    <property type="evidence" value="ECO:0000250"/>
    <property type="project" value="UniProtKB"/>
</dbReference>
<dbReference type="GO" id="GO:2001033">
    <property type="term" value="P:negative regulation of double-strand break repair via nonhomologous end joining"/>
    <property type="evidence" value="ECO:0000314"/>
    <property type="project" value="UniProtKB"/>
</dbReference>
<dbReference type="GO" id="GO:2001034">
    <property type="term" value="P:positive regulation of double-strand break repair via nonhomologous end joining"/>
    <property type="evidence" value="ECO:0007669"/>
    <property type="project" value="Ensembl"/>
</dbReference>
<dbReference type="GO" id="GO:1990166">
    <property type="term" value="P:protein localization to site of double-strand break"/>
    <property type="evidence" value="ECO:0007669"/>
    <property type="project" value="Ensembl"/>
</dbReference>
<dbReference type="InterPro" id="IPR028278">
    <property type="entry name" value="MRI"/>
</dbReference>
<dbReference type="PANTHER" id="PTHR14566">
    <property type="entry name" value="CELL CYCLE REGULATOR OF NON-HOMOLOGOUS END JOINING"/>
    <property type="match status" value="1"/>
</dbReference>
<dbReference type="PANTHER" id="PTHR14566:SF0">
    <property type="entry name" value="CELL CYCLE REGULATOR OF NON-HOMOLOGOUS END JOINING"/>
    <property type="match status" value="1"/>
</dbReference>
<dbReference type="Pfam" id="PF15325">
    <property type="entry name" value="MRI"/>
    <property type="match status" value="1"/>
</dbReference>
<comment type="function">
    <text evidence="1 2 5 7">Cell-cycle-specific regulator of classical non-homologous end joining (NHEJ) of DNA double-strand break (DSB) repair, which can act both as an activator or inhibitor of NHEJ, depending on the cell cycle phase (PubMed:24610814, PubMed:28959974). Acts as a regulator of DNA repair pathway choice by specifically inhibiting classical NHEJ during the S and G2 phases, thereby promoting error-free repair by homologous recombination during cell cycle phases when sister chromatids are present (PubMed:28959974). Preferentially protects single-stranded overhangs at break sites by inhibiting classical NHEJ, thereby creating a local environment that favors homologous recombination (PubMed:28959974). Acts via interaction with XRCC5/Ku80 and XRCC6/Ku70 (PubMed:28959974). In contrast, acts as an activator of NHEJ during G1 phase of the cell cycle: promotes classical NHEJ in G1 phase cells via multivalent interactions that increase the affinity of DNA damage response proteins for DSB-associated chromatin. Also involved in immunoglobulin V(D)J recombination (By similarity). May also act as an indirect regulator of proteasome (By similarity).</text>
</comment>
<comment type="subunit">
    <molecule>Isoform 1</molecule>
    <text evidence="2 5 6 7 8 9">Interacts (via KBM motif) with XRCC5/Ku80 and XRCC6/Ku70 heterodimer (PubMed:24610814, PubMed:27063109, PubMed:28959974). Interacts (via XLF motif) with TRIM28/KAP1, ATM, MRE11, NBN and RAD50 (By similarity). Interacts with splicing factor SF3B1 (PubMed:37813856). Interacts with ERCC6L2; this interaction is DNA independent (PubMed:32355287).</text>
</comment>
<comment type="subunit">
    <molecule>Isoform 3</molecule>
    <text evidence="5">Does not interact with XRCC5/Ku80 and XRCC6/Ku70 heterodimer (PubMed:24610814).</text>
</comment>
<comment type="subunit">
    <molecule>Isoform 4</molecule>
    <text evidence="5 7">Interacts (via KBM motif) with XRCC5/Ku80 and XRCC6/Ku70 heterodimer (PubMed:24610814, PubMed:28959974).</text>
</comment>
<comment type="interaction">
    <interactant intactId="EBI-8787584">
        <id>Q9BWK5</id>
    </interactant>
    <interactant intactId="EBI-3951765">
        <id>Q5T890</id>
        <label>ERCC6L2</label>
    </interactant>
    <organismsDiffer>false</organismsDiffer>
    <experiments>3</experiments>
</comment>
<comment type="interaction">
    <interactant intactId="EBI-8787584">
        <id>Q9BWK5</id>
    </interactant>
    <interactant intactId="EBI-1048053">
        <id>Q9UL63</id>
        <label>MKLN1</label>
    </interactant>
    <organismsDiffer>false</organismsDiffer>
    <experiments>3</experiments>
</comment>
<comment type="subcellular location">
    <molecule>Isoform 1</molecule>
    <subcellularLocation>
        <location evidence="5">Cytoplasm</location>
    </subcellularLocation>
    <subcellularLocation>
        <location evidence="5">Nucleus</location>
    </subcellularLocation>
    <subcellularLocation>
        <location evidence="6">Chromosome</location>
    </subcellularLocation>
    <text evidence="5 6">Nuclear localization may depend upon interaction with XRCC5/Ku80 and XRCC6/Ku70 heterodimer (PubMed:24610814). Localizes to DNA damage sites (PubMed:27063109).</text>
</comment>
<comment type="subcellular location">
    <molecule>Isoform 3</molecule>
    <subcellularLocation>
        <location evidence="5">Cytoplasm</location>
    </subcellularLocation>
    <text evidence="5">Some nuclear localization may be due to passive diffusion.</text>
</comment>
<comment type="subcellular location">
    <molecule>Isoform 4</molecule>
    <subcellularLocation>
        <location evidence="5">Cytoplasm</location>
    </subcellularLocation>
    <subcellularLocation>
        <location evidence="5">Nucleus</location>
    </subcellularLocation>
    <text evidence="5">Nuclear localization may depend upon interaction with XRCC5/Ku80 and XRCC6/Ku70 heterodimer and increases upon etoposide treatment.</text>
</comment>
<comment type="alternative products">
    <event type="alternative splicing"/>
    <isoform>
        <id>Q9BWK5-1</id>
        <name>1</name>
        <name evidence="14">CYREN-1</name>
        <name evidence="12">MRI-1</name>
        <sequence type="displayed"/>
    </isoform>
    <isoform>
        <id>Q9BWK5-2</id>
        <name>2</name>
        <sequence type="described" ref="VSP_031768"/>
    </isoform>
    <isoform>
        <id>Q9BWK5-3</id>
        <name>3</name>
        <name evidence="14">CYREN-3</name>
        <name evidence="12">MRI-3</name>
        <sequence type="described" ref="VSP_031767"/>
    </isoform>
    <isoform>
        <id>Q9BWK5-4</id>
        <name>4</name>
        <name evidence="14">CYREN-2</name>
        <name evidence="12">MRI-2</name>
        <sequence type="described" ref="VSP_058524 VSP_058525"/>
    </isoform>
</comment>
<comment type="domain">
    <text evidence="6 7">The KBM (Ku-binding motif) mediates interaction with XRCC5/Ku80 and XRCC6/Ku70 and recruitment to DNA damage sites.</text>
</comment>
<comment type="domain">
    <text evidence="2">The XLM (XLF-like motif) mediates interaction with DNA damage response proteins TRIM28/KAP1, ATM and members of the MRN complex (MRE11, NBN and RAD50).</text>
</comment>
<comment type="sequence caution" evidence="15">
    <conflict type="erroneous initiation">
        <sequence resource="EMBL-CDS" id="AAH00168"/>
    </conflict>
    <text>Truncated N-terminus.</text>
</comment>
<reference key="1">
    <citation type="journal article" date="2004" name="Nat. Genet.">
        <title>Complete sequencing and characterization of 21,243 full-length human cDNAs.</title>
        <authorList>
            <person name="Ota T."/>
            <person name="Suzuki Y."/>
            <person name="Nishikawa T."/>
            <person name="Otsuki T."/>
            <person name="Sugiyama T."/>
            <person name="Irie R."/>
            <person name="Wakamatsu A."/>
            <person name="Hayashi K."/>
            <person name="Sato H."/>
            <person name="Nagai K."/>
            <person name="Kimura K."/>
            <person name="Makita H."/>
            <person name="Sekine M."/>
            <person name="Obayashi M."/>
            <person name="Nishi T."/>
            <person name="Shibahara T."/>
            <person name="Tanaka T."/>
            <person name="Ishii S."/>
            <person name="Yamamoto J."/>
            <person name="Saito K."/>
            <person name="Kawai Y."/>
            <person name="Isono Y."/>
            <person name="Nakamura Y."/>
            <person name="Nagahari K."/>
            <person name="Murakami K."/>
            <person name="Yasuda T."/>
            <person name="Iwayanagi T."/>
            <person name="Wagatsuma M."/>
            <person name="Shiratori A."/>
            <person name="Sudo H."/>
            <person name="Hosoiri T."/>
            <person name="Kaku Y."/>
            <person name="Kodaira H."/>
            <person name="Kondo H."/>
            <person name="Sugawara M."/>
            <person name="Takahashi M."/>
            <person name="Kanda K."/>
            <person name="Yokoi T."/>
            <person name="Furuya T."/>
            <person name="Kikkawa E."/>
            <person name="Omura Y."/>
            <person name="Abe K."/>
            <person name="Kamihara K."/>
            <person name="Katsuta N."/>
            <person name="Sato K."/>
            <person name="Tanikawa M."/>
            <person name="Yamazaki M."/>
            <person name="Ninomiya K."/>
            <person name="Ishibashi T."/>
            <person name="Yamashita H."/>
            <person name="Murakawa K."/>
            <person name="Fujimori K."/>
            <person name="Tanai H."/>
            <person name="Kimata M."/>
            <person name="Watanabe M."/>
            <person name="Hiraoka S."/>
            <person name="Chiba Y."/>
            <person name="Ishida S."/>
            <person name="Ono Y."/>
            <person name="Takiguchi S."/>
            <person name="Watanabe S."/>
            <person name="Yosida M."/>
            <person name="Hotuta T."/>
            <person name="Kusano J."/>
            <person name="Kanehori K."/>
            <person name="Takahashi-Fujii A."/>
            <person name="Hara H."/>
            <person name="Tanase T.-O."/>
            <person name="Nomura Y."/>
            <person name="Togiya S."/>
            <person name="Komai F."/>
            <person name="Hara R."/>
            <person name="Takeuchi K."/>
            <person name="Arita M."/>
            <person name="Imose N."/>
            <person name="Musashino K."/>
            <person name="Yuuki H."/>
            <person name="Oshima A."/>
            <person name="Sasaki N."/>
            <person name="Aotsuka S."/>
            <person name="Yoshikawa Y."/>
            <person name="Matsunawa H."/>
            <person name="Ichihara T."/>
            <person name="Shiohata N."/>
            <person name="Sano S."/>
            <person name="Moriya S."/>
            <person name="Momiyama H."/>
            <person name="Satoh N."/>
            <person name="Takami S."/>
            <person name="Terashima Y."/>
            <person name="Suzuki O."/>
            <person name="Nakagawa S."/>
            <person name="Senoh A."/>
            <person name="Mizoguchi H."/>
            <person name="Goto Y."/>
            <person name="Shimizu F."/>
            <person name="Wakebe H."/>
            <person name="Hishigaki H."/>
            <person name="Watanabe T."/>
            <person name="Sugiyama A."/>
            <person name="Takemoto M."/>
            <person name="Kawakami B."/>
            <person name="Yamazaki M."/>
            <person name="Watanabe K."/>
            <person name="Kumagai A."/>
            <person name="Itakura S."/>
            <person name="Fukuzumi Y."/>
            <person name="Fujimori Y."/>
            <person name="Komiyama M."/>
            <person name="Tashiro H."/>
            <person name="Tanigami A."/>
            <person name="Fujiwara T."/>
            <person name="Ono T."/>
            <person name="Yamada K."/>
            <person name="Fujii Y."/>
            <person name="Ozaki K."/>
            <person name="Hirao M."/>
            <person name="Ohmori Y."/>
            <person name="Kawabata A."/>
            <person name="Hikiji T."/>
            <person name="Kobatake N."/>
            <person name="Inagaki H."/>
            <person name="Ikema Y."/>
            <person name="Okamoto S."/>
            <person name="Okitani R."/>
            <person name="Kawakami T."/>
            <person name="Noguchi S."/>
            <person name="Itoh T."/>
            <person name="Shigeta K."/>
            <person name="Senba T."/>
            <person name="Matsumura K."/>
            <person name="Nakajima Y."/>
            <person name="Mizuno T."/>
            <person name="Morinaga M."/>
            <person name="Sasaki M."/>
            <person name="Togashi T."/>
            <person name="Oyama M."/>
            <person name="Hata H."/>
            <person name="Watanabe M."/>
            <person name="Komatsu T."/>
            <person name="Mizushima-Sugano J."/>
            <person name="Satoh T."/>
            <person name="Shirai Y."/>
            <person name="Takahashi Y."/>
            <person name="Nakagawa K."/>
            <person name="Okumura K."/>
            <person name="Nagase T."/>
            <person name="Nomura N."/>
            <person name="Kikuchi H."/>
            <person name="Masuho Y."/>
            <person name="Yamashita R."/>
            <person name="Nakai K."/>
            <person name="Yada T."/>
            <person name="Nakamura Y."/>
            <person name="Ohara O."/>
            <person name="Isogai T."/>
            <person name="Sugano S."/>
        </authorList>
    </citation>
    <scope>NUCLEOTIDE SEQUENCE [LARGE SCALE MRNA] (ISOFORMS 2 AND 4)</scope>
    <source>
        <tissue>Thymus</tissue>
    </source>
</reference>
<reference key="2">
    <citation type="journal article" date="2003" name="Science">
        <title>Human chromosome 7: DNA sequence and biology.</title>
        <authorList>
            <person name="Scherer S.W."/>
            <person name="Cheung J."/>
            <person name="MacDonald J.R."/>
            <person name="Osborne L.R."/>
            <person name="Nakabayashi K."/>
            <person name="Herbrick J.-A."/>
            <person name="Carson A.R."/>
            <person name="Parker-Katiraee L."/>
            <person name="Skaug J."/>
            <person name="Khaja R."/>
            <person name="Zhang J."/>
            <person name="Hudek A.K."/>
            <person name="Li M."/>
            <person name="Haddad M."/>
            <person name="Duggan G.E."/>
            <person name="Fernandez B.A."/>
            <person name="Kanematsu E."/>
            <person name="Gentles S."/>
            <person name="Christopoulos C.C."/>
            <person name="Choufani S."/>
            <person name="Kwasnicka D."/>
            <person name="Zheng X.H."/>
            <person name="Lai Z."/>
            <person name="Nusskern D.R."/>
            <person name="Zhang Q."/>
            <person name="Gu Z."/>
            <person name="Lu F."/>
            <person name="Zeesman S."/>
            <person name="Nowaczyk M.J."/>
            <person name="Teshima I."/>
            <person name="Chitayat D."/>
            <person name="Shuman C."/>
            <person name="Weksberg R."/>
            <person name="Zackai E.H."/>
            <person name="Grebe T.A."/>
            <person name="Cox S.R."/>
            <person name="Kirkpatrick S.J."/>
            <person name="Rahman N."/>
            <person name="Friedman J.M."/>
            <person name="Heng H.H.Q."/>
            <person name="Pelicci P.G."/>
            <person name="Lo-Coco F."/>
            <person name="Belloni E."/>
            <person name="Shaffer L.G."/>
            <person name="Pober B."/>
            <person name="Morton C.C."/>
            <person name="Gusella J.F."/>
            <person name="Bruns G.A.P."/>
            <person name="Korf B.R."/>
            <person name="Quade B.J."/>
            <person name="Ligon A.H."/>
            <person name="Ferguson H."/>
            <person name="Higgins A.W."/>
            <person name="Leach N.T."/>
            <person name="Herrick S.R."/>
            <person name="Lemyre E."/>
            <person name="Farra C.G."/>
            <person name="Kim H.-G."/>
            <person name="Summers A.M."/>
            <person name="Gripp K.W."/>
            <person name="Roberts W."/>
            <person name="Szatmari P."/>
            <person name="Winsor E.J.T."/>
            <person name="Grzeschik K.-H."/>
            <person name="Teebi A."/>
            <person name="Minassian B.A."/>
            <person name="Kere J."/>
            <person name="Armengol L."/>
            <person name="Pujana M.A."/>
            <person name="Estivill X."/>
            <person name="Wilson M.D."/>
            <person name="Koop B.F."/>
            <person name="Tosi S."/>
            <person name="Moore G.E."/>
            <person name="Boright A.P."/>
            <person name="Zlotorynski E."/>
            <person name="Kerem B."/>
            <person name="Kroisel P.M."/>
            <person name="Petek E."/>
            <person name="Oscier D.G."/>
            <person name="Mould S.J."/>
            <person name="Doehner H."/>
            <person name="Doehner K."/>
            <person name="Rommens J.M."/>
            <person name="Vincent J.B."/>
            <person name="Venter J.C."/>
            <person name="Li P.W."/>
            <person name="Mural R.J."/>
            <person name="Adams M.D."/>
            <person name="Tsui L.-C."/>
        </authorList>
    </citation>
    <scope>NUCLEOTIDE SEQUENCE [LARGE SCALE GENOMIC DNA]</scope>
</reference>
<reference key="3">
    <citation type="journal article" date="2003" name="Nature">
        <title>The DNA sequence of human chromosome 7.</title>
        <authorList>
            <person name="Hillier L.W."/>
            <person name="Fulton R.S."/>
            <person name="Fulton L.A."/>
            <person name="Graves T.A."/>
            <person name="Pepin K.H."/>
            <person name="Wagner-McPherson C."/>
            <person name="Layman D."/>
            <person name="Maas J."/>
            <person name="Jaeger S."/>
            <person name="Walker R."/>
            <person name="Wylie K."/>
            <person name="Sekhon M."/>
            <person name="Becker M.C."/>
            <person name="O'Laughlin M.D."/>
            <person name="Schaller M.E."/>
            <person name="Fewell G.A."/>
            <person name="Delehaunty K.D."/>
            <person name="Miner T.L."/>
            <person name="Nash W.E."/>
            <person name="Cordes M."/>
            <person name="Du H."/>
            <person name="Sun H."/>
            <person name="Edwards J."/>
            <person name="Bradshaw-Cordum H."/>
            <person name="Ali J."/>
            <person name="Andrews S."/>
            <person name="Isak A."/>
            <person name="Vanbrunt A."/>
            <person name="Nguyen C."/>
            <person name="Du F."/>
            <person name="Lamar B."/>
            <person name="Courtney L."/>
            <person name="Kalicki J."/>
            <person name="Ozersky P."/>
            <person name="Bielicki L."/>
            <person name="Scott K."/>
            <person name="Holmes A."/>
            <person name="Harkins R."/>
            <person name="Harris A."/>
            <person name="Strong C.M."/>
            <person name="Hou S."/>
            <person name="Tomlinson C."/>
            <person name="Dauphin-Kohlberg S."/>
            <person name="Kozlowicz-Reilly A."/>
            <person name="Leonard S."/>
            <person name="Rohlfing T."/>
            <person name="Rock S.M."/>
            <person name="Tin-Wollam A.-M."/>
            <person name="Abbott A."/>
            <person name="Minx P."/>
            <person name="Maupin R."/>
            <person name="Strowmatt C."/>
            <person name="Latreille P."/>
            <person name="Miller N."/>
            <person name="Johnson D."/>
            <person name="Murray J."/>
            <person name="Woessner J.P."/>
            <person name="Wendl M.C."/>
            <person name="Yang S.-P."/>
            <person name="Schultz B.R."/>
            <person name="Wallis J.W."/>
            <person name="Spieth J."/>
            <person name="Bieri T.A."/>
            <person name="Nelson J.O."/>
            <person name="Berkowicz N."/>
            <person name="Wohldmann P.E."/>
            <person name="Cook L.L."/>
            <person name="Hickenbotham M.T."/>
            <person name="Eldred J."/>
            <person name="Williams D."/>
            <person name="Bedell J.A."/>
            <person name="Mardis E.R."/>
            <person name="Clifton S.W."/>
            <person name="Chissoe S.L."/>
            <person name="Marra M.A."/>
            <person name="Raymond C."/>
            <person name="Haugen E."/>
            <person name="Gillett W."/>
            <person name="Zhou Y."/>
            <person name="James R."/>
            <person name="Phelps K."/>
            <person name="Iadanoto S."/>
            <person name="Bubb K."/>
            <person name="Simms E."/>
            <person name="Levy R."/>
            <person name="Clendenning J."/>
            <person name="Kaul R."/>
            <person name="Kent W.J."/>
            <person name="Furey T.S."/>
            <person name="Baertsch R.A."/>
            <person name="Brent M.R."/>
            <person name="Keibler E."/>
            <person name="Flicek P."/>
            <person name="Bork P."/>
            <person name="Suyama M."/>
            <person name="Bailey J.A."/>
            <person name="Portnoy M.E."/>
            <person name="Torrents D."/>
            <person name="Chinwalla A.T."/>
            <person name="Gish W.R."/>
            <person name="Eddy S.R."/>
            <person name="McPherson J.D."/>
            <person name="Olson M.V."/>
            <person name="Eichler E.E."/>
            <person name="Green E.D."/>
            <person name="Waterston R.H."/>
            <person name="Wilson R.K."/>
        </authorList>
    </citation>
    <scope>NUCLEOTIDE SEQUENCE [LARGE SCALE GENOMIC DNA]</scope>
</reference>
<reference key="4">
    <citation type="submission" date="2005-07" db="EMBL/GenBank/DDBJ databases">
        <authorList>
            <person name="Mural R.J."/>
            <person name="Istrail S."/>
            <person name="Sutton G.G."/>
            <person name="Florea L."/>
            <person name="Halpern A.L."/>
            <person name="Mobarry C.M."/>
            <person name="Lippert R."/>
            <person name="Walenz B."/>
            <person name="Shatkay H."/>
            <person name="Dew I."/>
            <person name="Miller J.R."/>
            <person name="Flanigan M.J."/>
            <person name="Edwards N.J."/>
            <person name="Bolanos R."/>
            <person name="Fasulo D."/>
            <person name="Halldorsson B.V."/>
            <person name="Hannenhalli S."/>
            <person name="Turner R."/>
            <person name="Yooseph S."/>
            <person name="Lu F."/>
            <person name="Nusskern D.R."/>
            <person name="Shue B.C."/>
            <person name="Zheng X.H."/>
            <person name="Zhong F."/>
            <person name="Delcher A.L."/>
            <person name="Huson D.H."/>
            <person name="Kravitz S.A."/>
            <person name="Mouchard L."/>
            <person name="Reinert K."/>
            <person name="Remington K.A."/>
            <person name="Clark A.G."/>
            <person name="Waterman M.S."/>
            <person name="Eichler E.E."/>
            <person name="Adams M.D."/>
            <person name="Hunkapiller M.W."/>
            <person name="Myers E.W."/>
            <person name="Venter J.C."/>
        </authorList>
    </citation>
    <scope>NUCLEOTIDE SEQUENCE [LARGE SCALE GENOMIC DNA]</scope>
</reference>
<reference key="5">
    <citation type="journal article" date="2004" name="Genome Res.">
        <title>The status, quality, and expansion of the NIH full-length cDNA project: the Mammalian Gene Collection (MGC).</title>
        <authorList>
            <consortium name="The MGC Project Team"/>
        </authorList>
    </citation>
    <scope>NUCLEOTIDE SEQUENCE [LARGE SCALE MRNA] (ISOFORMS 1 AND 3)</scope>
    <source>
        <tissue>Mammary gland</tissue>
        <tissue>Placenta</tissue>
    </source>
</reference>
<reference key="6">
    <citation type="journal article" date="2014" name="J. Biol. Chem.">
        <title>A human short open reading frame (sORF)-encoded polypeptide that stimulates DNA end joining.</title>
        <authorList>
            <person name="Slavoff S.A."/>
            <person name="Heo J."/>
            <person name="Budnik B.A."/>
            <person name="Hanakahi L.A."/>
            <person name="Saghatelian A."/>
        </authorList>
    </citation>
    <scope>PROTEIN SEQUENCE OF 54-69 (ISOFORM 4)</scope>
    <scope>FUNCTION</scope>
    <scope>INTERACTION WITH XRCC5 AND XRCC6</scope>
    <scope>SUBCELLULAR LOCATION</scope>
    <scope>MASS SPECTROMETRY</scope>
</reference>
<reference key="7">
    <citation type="journal article" date="2012" name="Proc. Natl. Acad. Sci. U.S.A.">
        <title>N-terminal acetylome analyses and functional insights of the N-terminal acetyltransferase NatB.</title>
        <authorList>
            <person name="Van Damme P."/>
            <person name="Lasa M."/>
            <person name="Polevoda B."/>
            <person name="Gazquez C."/>
            <person name="Elosegui-Artola A."/>
            <person name="Kim D.S."/>
            <person name="De Juan-Pardo E."/>
            <person name="Demeyer K."/>
            <person name="Hole K."/>
            <person name="Larrea E."/>
            <person name="Timmerman E."/>
            <person name="Prieto J."/>
            <person name="Arnesen T."/>
            <person name="Sherman F."/>
            <person name="Gevaert K."/>
            <person name="Aldabe R."/>
        </authorList>
    </citation>
    <scope>ACETYLATION [LARGE SCALE ANALYSIS] AT MET-1</scope>
    <scope>IDENTIFICATION BY MASS SPECTROMETRY [LARGE SCALE ANALYSIS]</scope>
</reference>
<reference key="8">
    <citation type="journal article" date="2016" name="Nat. Commun.">
        <title>The Ku-binding motif is a conserved module for recruitment and stimulation of non-homologous end-joining proteins.</title>
        <authorList>
            <person name="Grundy G.J."/>
            <person name="Rulten S.L."/>
            <person name="Arribas-Bosacoma R."/>
            <person name="Davidson K."/>
            <person name="Kozik Z."/>
            <person name="Oliver A.W."/>
            <person name="Pearl L.H."/>
            <person name="Caldecott K.W."/>
        </authorList>
    </citation>
    <scope>DOMAIN</scope>
    <scope>INTERACTION WITH XRCC5 AND XRCC6</scope>
    <scope>MUTAGENESIS OF TRP-16</scope>
</reference>
<reference key="9">
    <citation type="journal article" date="2017" name="Nature">
        <title>Regulation of DNA repair pathway choice in S and G2 phases by the NHEJ inhibitor CYREN.</title>
        <authorList>
            <person name="Arnoult N."/>
            <person name="Correia A."/>
            <person name="Ma J."/>
            <person name="Merlo A."/>
            <person name="Garcia-Gomez S."/>
            <person name="Maric M."/>
            <person name="Tognetti M."/>
            <person name="Benner C.W."/>
            <person name="Boulton S.J."/>
            <person name="Saghatelian A."/>
            <person name="Karlseder J."/>
        </authorList>
    </citation>
    <scope>FUNCTION</scope>
    <scope>INTERACTION WITH XRCC5 AND XRCC6</scope>
    <scope>DOMAIN</scope>
    <scope>MUTAGENESIS OF ARG-11; PRO-14 AND TRP-16</scope>
</reference>
<reference key="10">
    <citation type="journal article" date="2020" name="Cell Res.">
        <title>ERCC6L2 promotes DNA orientation-specific recombination in mammalian cells.</title>
        <authorList>
            <person name="Liu X."/>
            <person name="Liu T."/>
            <person name="Shang Y."/>
            <person name="Dai P."/>
            <person name="Zhang W."/>
            <person name="Lee B.J."/>
            <person name="Huang M."/>
            <person name="Yang D."/>
            <person name="Wu Q."/>
            <person name="Liu L.D."/>
            <person name="Zheng X."/>
            <person name="Zhou B.O."/>
            <person name="Dong J."/>
            <person name="Yeap L.S."/>
            <person name="Hu J."/>
            <person name="Xiao T."/>
            <person name="Zha S."/>
            <person name="Casellas R."/>
            <person name="Liu X.S."/>
            <person name="Meng F.L."/>
        </authorList>
    </citation>
    <scope>INTERACTION WITH ERCC6L2</scope>
</reference>
<reference key="11">
    <citation type="journal article" date="2023" name="Biochemistry">
        <title>Biochemistry and Protein Interactions of the CYREN Microprotein.</title>
        <authorList>
            <person name="Xie L."/>
            <person name="Bowman M.E."/>
            <person name="Louie G.V."/>
            <person name="Zhang C."/>
            <person name="Ardejani M.S."/>
            <person name="Huang X."/>
            <person name="Chu Q."/>
            <person name="Donaldson C.J."/>
            <person name="Vaughan J.M."/>
            <person name="Shan H."/>
            <person name="Powers E.T."/>
            <person name="Kelly J.W."/>
            <person name="Lyumkis D."/>
            <person name="Noel J.P."/>
            <person name="Saghatelian A."/>
        </authorList>
    </citation>
    <scope>INTERACTION WITH SF3B1</scope>
    <scope>MUTAGENESIS OF TRP-16; GLU-71 AND GLU-153</scope>
</reference>
<reference evidence="17" key="12">
    <citation type="journal article" date="2020" name="DNA Repair">
        <title>Ligand binding characteristics of the Ku80 von Willebrand domain.</title>
        <authorList>
            <person name="Kim K."/>
            <person name="Min J."/>
            <person name="Kirby T.W."/>
            <person name="Gabel S.A."/>
            <person name="Pedersen L.C."/>
            <person name="London R.E."/>
        </authorList>
    </citation>
    <scope>X-RAY CRYSTALLOGRAPHY (1.47 ANGSTROMS) OF 6-21 IN COMPLEX WITH X.LAEVIS XRCC5</scope>
</reference>
<reference key="13">
    <citation type="journal article" date="2006" name="Science">
        <title>The consensus coding sequences of human breast and colorectal cancers.</title>
        <authorList>
            <person name="Sjoeblom T."/>
            <person name="Jones S."/>
            <person name="Wood L.D."/>
            <person name="Parsons D.W."/>
            <person name="Lin J."/>
            <person name="Barber T.D."/>
            <person name="Mandelker D."/>
            <person name="Leary R.J."/>
            <person name="Ptak J."/>
            <person name="Silliman N."/>
            <person name="Szabo S."/>
            <person name="Buckhaults P."/>
            <person name="Farrell C."/>
            <person name="Meeh P."/>
            <person name="Markowitz S.D."/>
            <person name="Willis J."/>
            <person name="Dawson D."/>
            <person name="Willson J.K.V."/>
            <person name="Gazdar A.F."/>
            <person name="Hartigan J."/>
            <person name="Wu L."/>
            <person name="Liu C."/>
            <person name="Parmigiani G."/>
            <person name="Park B.H."/>
            <person name="Bachman K.E."/>
            <person name="Papadopoulos N."/>
            <person name="Vogelstein B."/>
            <person name="Kinzler K.W."/>
            <person name="Velculescu V.E."/>
        </authorList>
    </citation>
    <scope>VARIANT [LARGE SCALE ANALYSIS] LEU-82</scope>
</reference>
<gene>
    <name evidence="16" type="primary">CYREN</name>
    <name evidence="16" type="synonym">C7orf49</name>
    <name evidence="1" type="synonym">MRI</name>
</gene>
<evidence type="ECO:0000250" key="1">
    <source>
        <dbReference type="UniProtKB" id="Q09HN1"/>
    </source>
</evidence>
<evidence type="ECO:0000250" key="2">
    <source>
        <dbReference type="UniProtKB" id="Q8BHZ5"/>
    </source>
</evidence>
<evidence type="ECO:0000256" key="3">
    <source>
        <dbReference type="SAM" id="MobiDB-lite"/>
    </source>
</evidence>
<evidence type="ECO:0000269" key="4">
    <source>
    </source>
</evidence>
<evidence type="ECO:0000269" key="5">
    <source>
    </source>
</evidence>
<evidence type="ECO:0000269" key="6">
    <source>
    </source>
</evidence>
<evidence type="ECO:0000269" key="7">
    <source>
    </source>
</evidence>
<evidence type="ECO:0000269" key="8">
    <source>
    </source>
</evidence>
<evidence type="ECO:0000269" key="9">
    <source>
    </source>
</evidence>
<evidence type="ECO:0000303" key="10">
    <source>
    </source>
</evidence>
<evidence type="ECO:0000303" key="11">
    <source>
    </source>
</evidence>
<evidence type="ECO:0000303" key="12">
    <source>
    </source>
</evidence>
<evidence type="ECO:0000303" key="13">
    <source>
    </source>
</evidence>
<evidence type="ECO:0000303" key="14">
    <source>
    </source>
</evidence>
<evidence type="ECO:0000305" key="15"/>
<evidence type="ECO:0000312" key="16">
    <source>
        <dbReference type="HGNC" id="HGNC:22432"/>
    </source>
</evidence>
<evidence type="ECO:0007744" key="17">
    <source>
        <dbReference type="PDB" id="6TYU"/>
    </source>
</evidence>
<evidence type="ECO:0007744" key="18">
    <source>
    </source>
</evidence>
<evidence type="ECO:0007829" key="19">
    <source>
        <dbReference type="PDB" id="6TYU"/>
    </source>
</evidence>
<protein>
    <recommendedName>
        <fullName evidence="14">Cell cycle regulator of non-homologous end joining</fullName>
        <shortName evidence="14">Cell cycle regulator of NHEJ</shortName>
    </recommendedName>
    <alternativeName>
        <fullName evidence="1">Modulator of retrovirus infection homolog</fullName>
    </alternativeName>
</protein>
<name>CYREN_HUMAN</name>
<organism>
    <name type="scientific">Homo sapiens</name>
    <name type="common">Human</name>
    <dbReference type="NCBI Taxonomy" id="9606"/>
    <lineage>
        <taxon>Eukaryota</taxon>
        <taxon>Metazoa</taxon>
        <taxon>Chordata</taxon>
        <taxon>Craniata</taxon>
        <taxon>Vertebrata</taxon>
        <taxon>Euteleostomi</taxon>
        <taxon>Mammalia</taxon>
        <taxon>Eutheria</taxon>
        <taxon>Euarchontoglires</taxon>
        <taxon>Primates</taxon>
        <taxon>Haplorrhini</taxon>
        <taxon>Catarrhini</taxon>
        <taxon>Hominidae</taxon>
        <taxon>Homo</taxon>
    </lineage>
</organism>
<proteinExistence type="evidence at protein level"/>
<sequence>METLQSETKTRVLPSWLTAQVATKNVAPMKAPKRMRMAAVPVAAARLPATRTVYCMNEAEIVDVALGILIESRKQEKACEQPALAGADNPEHSPPCSVSPHTSSGSSSEEEDSGKQALAPGLSPSQRPGGSSSACSRSPEEEEEEDVLKYVREIFFS</sequence>